<keyword id="KW-0028">Amino-acid biosynthesis</keyword>
<keyword id="KW-0055">Arginine biosynthesis</keyword>
<keyword id="KW-0067">ATP-binding</keyword>
<keyword id="KW-0963">Cytoplasm</keyword>
<keyword id="KW-0436">Ligase</keyword>
<keyword id="KW-0547">Nucleotide-binding</keyword>
<evidence type="ECO:0000255" key="1">
    <source>
        <dbReference type="HAMAP-Rule" id="MF_00005"/>
    </source>
</evidence>
<comment type="catalytic activity">
    <reaction evidence="1">
        <text>L-citrulline + L-aspartate + ATP = 2-(N(omega)-L-arginino)succinate + AMP + diphosphate + H(+)</text>
        <dbReference type="Rhea" id="RHEA:10932"/>
        <dbReference type="ChEBI" id="CHEBI:15378"/>
        <dbReference type="ChEBI" id="CHEBI:29991"/>
        <dbReference type="ChEBI" id="CHEBI:30616"/>
        <dbReference type="ChEBI" id="CHEBI:33019"/>
        <dbReference type="ChEBI" id="CHEBI:57472"/>
        <dbReference type="ChEBI" id="CHEBI:57743"/>
        <dbReference type="ChEBI" id="CHEBI:456215"/>
        <dbReference type="EC" id="6.3.4.5"/>
    </reaction>
</comment>
<comment type="pathway">
    <text evidence="1">Amino-acid biosynthesis; L-arginine biosynthesis; L-arginine from L-ornithine and carbamoyl phosphate: step 2/3.</text>
</comment>
<comment type="subunit">
    <text evidence="1">Homotetramer.</text>
</comment>
<comment type="subcellular location">
    <subcellularLocation>
        <location evidence="1">Cytoplasm</location>
    </subcellularLocation>
</comment>
<comment type="similarity">
    <text evidence="1">Belongs to the argininosuccinate synthase family. Type 1 subfamily.</text>
</comment>
<accession>Q3MBE6</accession>
<protein>
    <recommendedName>
        <fullName evidence="1">Argininosuccinate synthase</fullName>
        <ecNumber evidence="1">6.3.4.5</ecNumber>
    </recommendedName>
    <alternativeName>
        <fullName evidence="1">Citrulline--aspartate ligase</fullName>
    </alternativeName>
</protein>
<proteinExistence type="inferred from homology"/>
<name>ASSY_TRIV2</name>
<feature type="chain" id="PRO_0000263906" description="Argininosuccinate synthase">
    <location>
        <begin position="1"/>
        <end position="400"/>
    </location>
</feature>
<feature type="binding site" evidence="1">
    <location>
        <begin position="10"/>
        <end position="18"/>
    </location>
    <ligand>
        <name>ATP</name>
        <dbReference type="ChEBI" id="CHEBI:30616"/>
    </ligand>
</feature>
<feature type="binding site" evidence="1">
    <location>
        <position position="38"/>
    </location>
    <ligand>
        <name>ATP</name>
        <dbReference type="ChEBI" id="CHEBI:30616"/>
    </ligand>
</feature>
<feature type="binding site" evidence="1">
    <location>
        <position position="89"/>
    </location>
    <ligand>
        <name>L-citrulline</name>
        <dbReference type="ChEBI" id="CHEBI:57743"/>
    </ligand>
</feature>
<feature type="binding site" evidence="1">
    <location>
        <position position="119"/>
    </location>
    <ligand>
        <name>ATP</name>
        <dbReference type="ChEBI" id="CHEBI:30616"/>
    </ligand>
</feature>
<feature type="binding site" evidence="1">
    <location>
        <position position="121"/>
    </location>
    <ligand>
        <name>L-aspartate</name>
        <dbReference type="ChEBI" id="CHEBI:29991"/>
    </ligand>
</feature>
<feature type="binding site" evidence="1">
    <location>
        <position position="125"/>
    </location>
    <ligand>
        <name>L-aspartate</name>
        <dbReference type="ChEBI" id="CHEBI:29991"/>
    </ligand>
</feature>
<feature type="binding site" evidence="1">
    <location>
        <position position="125"/>
    </location>
    <ligand>
        <name>L-citrulline</name>
        <dbReference type="ChEBI" id="CHEBI:57743"/>
    </ligand>
</feature>
<feature type="binding site" evidence="1">
    <location>
        <position position="126"/>
    </location>
    <ligand>
        <name>L-aspartate</name>
        <dbReference type="ChEBI" id="CHEBI:29991"/>
    </ligand>
</feature>
<feature type="binding site" evidence="1">
    <location>
        <position position="129"/>
    </location>
    <ligand>
        <name>L-citrulline</name>
        <dbReference type="ChEBI" id="CHEBI:57743"/>
    </ligand>
</feature>
<feature type="binding site" evidence="1">
    <location>
        <position position="177"/>
    </location>
    <ligand>
        <name>L-citrulline</name>
        <dbReference type="ChEBI" id="CHEBI:57743"/>
    </ligand>
</feature>
<feature type="binding site" evidence="1">
    <location>
        <position position="186"/>
    </location>
    <ligand>
        <name>L-citrulline</name>
        <dbReference type="ChEBI" id="CHEBI:57743"/>
    </ligand>
</feature>
<feature type="binding site" evidence="1">
    <location>
        <position position="262"/>
    </location>
    <ligand>
        <name>L-citrulline</name>
        <dbReference type="ChEBI" id="CHEBI:57743"/>
    </ligand>
</feature>
<feature type="binding site" evidence="1">
    <location>
        <position position="274"/>
    </location>
    <ligand>
        <name>L-citrulline</name>
        <dbReference type="ChEBI" id="CHEBI:57743"/>
    </ligand>
</feature>
<dbReference type="EC" id="6.3.4.5" evidence="1"/>
<dbReference type="EMBL" id="CP000117">
    <property type="protein sequence ID" value="ABA21690.1"/>
    <property type="molecule type" value="Genomic_DNA"/>
</dbReference>
<dbReference type="SMR" id="Q3MBE6"/>
<dbReference type="STRING" id="240292.Ava_2068"/>
<dbReference type="KEGG" id="ava:Ava_2068"/>
<dbReference type="eggNOG" id="COG0137">
    <property type="taxonomic scope" value="Bacteria"/>
</dbReference>
<dbReference type="HOGENOM" id="CLU_032784_4_2_3"/>
<dbReference type="UniPathway" id="UPA00068">
    <property type="reaction ID" value="UER00113"/>
</dbReference>
<dbReference type="Proteomes" id="UP000002533">
    <property type="component" value="Chromosome"/>
</dbReference>
<dbReference type="GO" id="GO:0005737">
    <property type="term" value="C:cytoplasm"/>
    <property type="evidence" value="ECO:0007669"/>
    <property type="project" value="UniProtKB-SubCell"/>
</dbReference>
<dbReference type="GO" id="GO:0004055">
    <property type="term" value="F:argininosuccinate synthase activity"/>
    <property type="evidence" value="ECO:0007669"/>
    <property type="project" value="UniProtKB-UniRule"/>
</dbReference>
<dbReference type="GO" id="GO:0005524">
    <property type="term" value="F:ATP binding"/>
    <property type="evidence" value="ECO:0007669"/>
    <property type="project" value="UniProtKB-UniRule"/>
</dbReference>
<dbReference type="GO" id="GO:0000053">
    <property type="term" value="P:argininosuccinate metabolic process"/>
    <property type="evidence" value="ECO:0007669"/>
    <property type="project" value="TreeGrafter"/>
</dbReference>
<dbReference type="GO" id="GO:0006526">
    <property type="term" value="P:L-arginine biosynthetic process"/>
    <property type="evidence" value="ECO:0007669"/>
    <property type="project" value="UniProtKB-UniRule"/>
</dbReference>
<dbReference type="GO" id="GO:0000050">
    <property type="term" value="P:urea cycle"/>
    <property type="evidence" value="ECO:0007669"/>
    <property type="project" value="TreeGrafter"/>
</dbReference>
<dbReference type="CDD" id="cd01999">
    <property type="entry name" value="ASS"/>
    <property type="match status" value="1"/>
</dbReference>
<dbReference type="FunFam" id="3.40.50.620:FF:000019">
    <property type="entry name" value="Argininosuccinate synthase"/>
    <property type="match status" value="1"/>
</dbReference>
<dbReference type="FunFam" id="3.90.1260.10:FF:000007">
    <property type="entry name" value="Argininosuccinate synthase"/>
    <property type="match status" value="1"/>
</dbReference>
<dbReference type="Gene3D" id="3.90.1260.10">
    <property type="entry name" value="Argininosuccinate synthetase, chain A, domain 2"/>
    <property type="match status" value="1"/>
</dbReference>
<dbReference type="Gene3D" id="3.40.50.620">
    <property type="entry name" value="HUPs"/>
    <property type="match status" value="1"/>
</dbReference>
<dbReference type="Gene3D" id="1.20.5.470">
    <property type="entry name" value="Single helix bin"/>
    <property type="match status" value="1"/>
</dbReference>
<dbReference type="HAMAP" id="MF_00005">
    <property type="entry name" value="Arg_succ_synth_type1"/>
    <property type="match status" value="1"/>
</dbReference>
<dbReference type="InterPro" id="IPR048268">
    <property type="entry name" value="Arginosuc_syn_C"/>
</dbReference>
<dbReference type="InterPro" id="IPR048267">
    <property type="entry name" value="Arginosuc_syn_N"/>
</dbReference>
<dbReference type="InterPro" id="IPR001518">
    <property type="entry name" value="Arginosuc_synth"/>
</dbReference>
<dbReference type="InterPro" id="IPR018223">
    <property type="entry name" value="Arginosuc_synth_CS"/>
</dbReference>
<dbReference type="InterPro" id="IPR023434">
    <property type="entry name" value="Arginosuc_synth_type_1_subfam"/>
</dbReference>
<dbReference type="InterPro" id="IPR024074">
    <property type="entry name" value="AS_cat/multimer_dom_body"/>
</dbReference>
<dbReference type="InterPro" id="IPR014729">
    <property type="entry name" value="Rossmann-like_a/b/a_fold"/>
</dbReference>
<dbReference type="NCBIfam" id="TIGR00032">
    <property type="entry name" value="argG"/>
    <property type="match status" value="1"/>
</dbReference>
<dbReference type="NCBIfam" id="NF001770">
    <property type="entry name" value="PRK00509.1"/>
    <property type="match status" value="1"/>
</dbReference>
<dbReference type="PANTHER" id="PTHR11587">
    <property type="entry name" value="ARGININOSUCCINATE SYNTHASE"/>
    <property type="match status" value="1"/>
</dbReference>
<dbReference type="PANTHER" id="PTHR11587:SF2">
    <property type="entry name" value="ARGININOSUCCINATE SYNTHASE"/>
    <property type="match status" value="1"/>
</dbReference>
<dbReference type="Pfam" id="PF20979">
    <property type="entry name" value="Arginosuc_syn_C"/>
    <property type="match status" value="1"/>
</dbReference>
<dbReference type="Pfam" id="PF00764">
    <property type="entry name" value="Arginosuc_synth"/>
    <property type="match status" value="1"/>
</dbReference>
<dbReference type="SUPFAM" id="SSF52402">
    <property type="entry name" value="Adenine nucleotide alpha hydrolases-like"/>
    <property type="match status" value="1"/>
</dbReference>
<dbReference type="SUPFAM" id="SSF69864">
    <property type="entry name" value="Argininosuccinate synthetase, C-terminal domain"/>
    <property type="match status" value="1"/>
</dbReference>
<dbReference type="PROSITE" id="PS00564">
    <property type="entry name" value="ARGININOSUCCIN_SYN_1"/>
    <property type="match status" value="1"/>
</dbReference>
<dbReference type="PROSITE" id="PS00565">
    <property type="entry name" value="ARGININOSUCCIN_SYN_2"/>
    <property type="match status" value="1"/>
</dbReference>
<organism>
    <name type="scientific">Trichormus variabilis (strain ATCC 29413 / PCC 7937)</name>
    <name type="common">Anabaena variabilis</name>
    <dbReference type="NCBI Taxonomy" id="240292"/>
    <lineage>
        <taxon>Bacteria</taxon>
        <taxon>Bacillati</taxon>
        <taxon>Cyanobacteriota</taxon>
        <taxon>Cyanophyceae</taxon>
        <taxon>Nostocales</taxon>
        <taxon>Nostocaceae</taxon>
        <taxon>Trichormus</taxon>
    </lineage>
</organism>
<gene>
    <name evidence="1" type="primary">argG</name>
    <name type="ordered locus">Ava_2068</name>
</gene>
<sequence>MGRAKKVVLAYSGGVDTSVCIPYLKQEWGVEEVITLAADLGQGDELEPIREKALKSGASESLVADVKESFIKDYAFPAIQANALYENRYPLGTALARPLIAKILVEAAEKYGADAIAHGCTGKGNDQVRFDVSCTALNPKLKILAPAREWGMSREATIAYGEKFGIPSPVKKSSPYSIDKNLLGRSIEAGALEDPKFEPPEEIYEMTKAIADTPNEPEYIEIGFTQGLPTTINGTPKDPVALIQELNQLVGSHGVGRIDMIENRLVGIKSREIYESPAMLVLIQAHRDLESLTLTADVSHYKRGIEETYSQIVYNGLWYSPLKAALDAFIQKTQERVSGIVRVKLFKGNATIVGRWSDSSLYTPDLATYGAEDQFDHKAAEGFIYVWGLPTRIWAQQDRG</sequence>
<reference key="1">
    <citation type="journal article" date="2014" name="Stand. Genomic Sci.">
        <title>Complete genome sequence of Anabaena variabilis ATCC 29413.</title>
        <authorList>
            <person name="Thiel T."/>
            <person name="Pratte B.S."/>
            <person name="Zhong J."/>
            <person name="Goodwin L."/>
            <person name="Copeland A."/>
            <person name="Lucas S."/>
            <person name="Han C."/>
            <person name="Pitluck S."/>
            <person name="Land M.L."/>
            <person name="Kyrpides N.C."/>
            <person name="Woyke T."/>
        </authorList>
    </citation>
    <scope>NUCLEOTIDE SEQUENCE [LARGE SCALE GENOMIC DNA]</scope>
    <source>
        <strain>ATCC 29413 / PCC 7937</strain>
    </source>
</reference>